<organism>
    <name type="scientific">Monascus ruber</name>
    <name type="common">Mold</name>
    <dbReference type="NCBI Taxonomy" id="89489"/>
    <lineage>
        <taxon>Eukaryota</taxon>
        <taxon>Fungi</taxon>
        <taxon>Dikarya</taxon>
        <taxon>Ascomycota</taxon>
        <taxon>Pezizomycotina</taxon>
        <taxon>Eurotiomycetes</taxon>
        <taxon>Eurotiomycetidae</taxon>
        <taxon>Eurotiales</taxon>
        <taxon>Aspergillaceae</taxon>
        <taxon>Monascus</taxon>
    </lineage>
</organism>
<proteinExistence type="evidence at protein level"/>
<sequence>MAEAAARILEALPAVCEYRWSCKDASKRFTVVNPATGEPITVVQAGNLDTVQGAIQASHRAFESWRWKTRQERSLYLLQAADELQKHSHELAVLLCLENGKPVKDASFDVGFLVQVFRYFGSIVDKLPSEFFDQGSIYSSVIYEPHGVCVGILPFNWPPVHAGGKLAPCLAAGNTMVLKPGEQAPLTLMRIVEILQSVFPADVVQAVPGLGPEIPQALINHPLVKMVSLTGSTASGSQAAQTAAVTLTPTVLELGGKNAFVVFEDADLELVVRDAIDGAFFNKGESCTAASRILVHKDLYPTLVSRLTAAVKKLRTGDGLDETTHIGPVVSRERQQEVLSYIEQGKREGATLAAQGDPPTAGRLSGGFFVPPTLFTDVTADMTIAQREIFGPVVTVGSFETEEEAVKTVNSSQYGLFAGVYSSDFTRAMRVTRKLDVGVVLVNNYFRALLGTPFGGVKDSGYGREHWIGTLREWSRVKNVRFPSGLSPIPAWGGAVDVCKL</sequence>
<reference key="1">
    <citation type="journal article" date="2016" name="Chem. Sci.">
        <title>The molecular steps of citrinin biosynthesis in fungi.</title>
        <authorList>
            <person name="He Y."/>
            <person name="Cox R.J."/>
        </authorList>
    </citation>
    <scope>NUCLEOTIDE SEQUENCE [GENOMIC DNA]</scope>
    <scope>DISRUPTION PHENOTYPE</scope>
    <scope>FUNCTION</scope>
    <scope>CATALYTIC ACTIVITY</scope>
    <scope>PATHWAY</scope>
    <source>
        <strain>M7</strain>
    </source>
</reference>
<reference key="2">
    <citation type="journal article" date="2017" name="Chem. Commun. (Camb.)">
        <title>In trans hydrolysis of carrier protein-bound acyl intermediates by CitA during citrinin biosynthesis.</title>
        <authorList>
            <person name="Storm P.A."/>
            <person name="Townsend C.A."/>
        </authorList>
    </citation>
    <scope>FUNCTION</scope>
</reference>
<comment type="function">
    <text evidence="5 6">Non-reducing polyketide synthase; part of the gene cluster that mediates the biosynthesis of the mycotoxin citrinin, a hepato-nephrotoxic compound to humans due to inhibition of respiration complex III (Ref.1). The pathway begins with the synthesis of a keto-aldehyde intermediate by the citrinin PKS (pksCT also named citS) from successive condensations of 4 malonyl-CoA units, presumably with a simple acetyl-CoA starter unit (Ref.1). Release of the keto-aldehyde intermediate is consistent with the presence of the C-terminal reductive release domain (Ref.1). CitA collaborates with citS by catalyzing the hydrolysis of ACP-bound acyl intermediates to free the ACP from stalled intermediates (PubMed:29189834). CitB then catalyzes the oxidation of the C-12 methyl of the ketone intermediate to an alcohol intermediate which is further oxidized by the oxidoreductase citC to produce a bisaldehyde intermediate (Ref.1). The fourth catalytic step is catalyzed by the citD aldehyde dehydrogenase (Ref.1). The final transformation is the reduction of C-3 by citE to provide the chemically stable citrinin nucleus (Ref.1). CitE appears highly selective for its substrate as its presence in any context other than a full complement of citS and citA-D does not result in observable new compounds (Ref.1).</text>
</comment>
<comment type="catalytic activity">
    <reaction evidence="3">
        <text>an aldehyde + NAD(+) + H2O = a carboxylate + NADH + 2 H(+)</text>
        <dbReference type="Rhea" id="RHEA:16185"/>
        <dbReference type="ChEBI" id="CHEBI:15377"/>
        <dbReference type="ChEBI" id="CHEBI:15378"/>
        <dbReference type="ChEBI" id="CHEBI:17478"/>
        <dbReference type="ChEBI" id="CHEBI:29067"/>
        <dbReference type="ChEBI" id="CHEBI:57540"/>
        <dbReference type="ChEBI" id="CHEBI:57945"/>
        <dbReference type="EC" id="1.2.1.3"/>
    </reaction>
</comment>
<comment type="pathway">
    <text evidence="6">Mycotoxin biosynthesis.</text>
</comment>
<comment type="disruption phenotype">
    <text evidence="6">Leads to complete absence of citrinin production (Ref.1).</text>
</comment>
<comment type="similarity">
    <text evidence="2">Belongs to the aldehyde dehydrogenase family.</text>
</comment>
<protein>
    <recommendedName>
        <fullName evidence="7">Aldehyde dehydrogenase citD</fullName>
        <ecNumber evidence="3">1.2.1.3</ecNumber>
    </recommendedName>
    <alternativeName>
        <fullName evidence="7">Citrinin synthesis protein D</fullName>
    </alternativeName>
</protein>
<evidence type="ECO:0000250" key="1">
    <source>
        <dbReference type="UniProtKB" id="Q28399"/>
    </source>
</evidence>
<evidence type="ECO:0000255" key="2"/>
<evidence type="ECO:0000255" key="3">
    <source>
        <dbReference type="PROSITE-ProRule" id="PRU10007"/>
    </source>
</evidence>
<evidence type="ECO:0000255" key="4">
    <source>
        <dbReference type="PROSITE-ProRule" id="PRU10008"/>
    </source>
</evidence>
<evidence type="ECO:0000269" key="5">
    <source>
    </source>
</evidence>
<evidence type="ECO:0000269" key="6">
    <source ref="1"/>
</evidence>
<evidence type="ECO:0000303" key="7">
    <source ref="1"/>
</evidence>
<keyword id="KW-0520">NAD</keyword>
<keyword id="KW-0560">Oxidoreductase</keyword>
<name>CITD_MONRU</name>
<accession>A0A162J448</accession>
<dbReference type="EC" id="1.2.1.3" evidence="3"/>
<dbReference type="EMBL" id="KT781075">
    <property type="protein sequence ID" value="ALI92651.1"/>
    <property type="molecule type" value="Genomic_DNA"/>
</dbReference>
<dbReference type="SMR" id="A0A162J448"/>
<dbReference type="GO" id="GO:0004029">
    <property type="term" value="F:aldehyde dehydrogenase (NAD+) activity"/>
    <property type="evidence" value="ECO:0007669"/>
    <property type="project" value="UniProtKB-EC"/>
</dbReference>
<dbReference type="CDD" id="cd07078">
    <property type="entry name" value="ALDH"/>
    <property type="match status" value="1"/>
</dbReference>
<dbReference type="FunFam" id="3.40.309.10:FF:000012">
    <property type="entry name" value="Betaine aldehyde dehydrogenase"/>
    <property type="match status" value="1"/>
</dbReference>
<dbReference type="FunFam" id="3.40.605.10:FF:000007">
    <property type="entry name" value="NAD/NADP-dependent betaine aldehyde dehydrogenase"/>
    <property type="match status" value="1"/>
</dbReference>
<dbReference type="Gene3D" id="3.40.605.10">
    <property type="entry name" value="Aldehyde Dehydrogenase, Chain A, domain 1"/>
    <property type="match status" value="1"/>
</dbReference>
<dbReference type="Gene3D" id="3.40.309.10">
    <property type="entry name" value="Aldehyde Dehydrogenase, Chain A, domain 2"/>
    <property type="match status" value="1"/>
</dbReference>
<dbReference type="InterPro" id="IPR016161">
    <property type="entry name" value="Ald_DH/histidinol_DH"/>
</dbReference>
<dbReference type="InterPro" id="IPR016163">
    <property type="entry name" value="Ald_DH_C"/>
</dbReference>
<dbReference type="InterPro" id="IPR016160">
    <property type="entry name" value="Ald_DH_CS_CYS"/>
</dbReference>
<dbReference type="InterPro" id="IPR029510">
    <property type="entry name" value="Ald_DH_CS_GLU"/>
</dbReference>
<dbReference type="InterPro" id="IPR016162">
    <property type="entry name" value="Ald_DH_N"/>
</dbReference>
<dbReference type="InterPro" id="IPR015590">
    <property type="entry name" value="Aldehyde_DH_dom"/>
</dbReference>
<dbReference type="PANTHER" id="PTHR11699">
    <property type="entry name" value="ALDEHYDE DEHYDROGENASE-RELATED"/>
    <property type="match status" value="1"/>
</dbReference>
<dbReference type="Pfam" id="PF00171">
    <property type="entry name" value="Aldedh"/>
    <property type="match status" value="1"/>
</dbReference>
<dbReference type="SUPFAM" id="SSF53720">
    <property type="entry name" value="ALDH-like"/>
    <property type="match status" value="1"/>
</dbReference>
<dbReference type="PROSITE" id="PS00070">
    <property type="entry name" value="ALDEHYDE_DEHYDR_CYS"/>
    <property type="match status" value="1"/>
</dbReference>
<dbReference type="PROSITE" id="PS00687">
    <property type="entry name" value="ALDEHYDE_DEHYDR_GLU"/>
    <property type="match status" value="1"/>
</dbReference>
<feature type="chain" id="PRO_0000440321" description="Aldehyde dehydrogenase citD">
    <location>
        <begin position="1"/>
        <end position="501"/>
    </location>
</feature>
<feature type="active site" evidence="3">
    <location>
        <position position="253"/>
    </location>
</feature>
<feature type="active site" evidence="4">
    <location>
        <position position="287"/>
    </location>
</feature>
<feature type="binding site" evidence="1">
    <location>
        <begin position="231"/>
        <end position="236"/>
    </location>
    <ligand>
        <name>NAD(+)</name>
        <dbReference type="ChEBI" id="CHEBI:57540"/>
    </ligand>
</feature>
<gene>
    <name evidence="7" type="primary">citD</name>
    <name evidence="7" type="synonym">mrl4</name>
</gene>